<proteinExistence type="evidence at protein level"/>
<gene>
    <name evidence="2" type="primary">rpl-13A</name>
    <name evidence="2" type="ORF">M01F1.2</name>
</gene>
<comment type="similarity">
    <text evidence="1">Belongs to the universal ribosomal protein uL13 family.</text>
</comment>
<sequence>MGLSNRAIIIDGKNHLLGRLASIVAKKLLQGDKVVVLRAEEIVISGNFHRSKLKYMSFLRKRCNINPARGAFHYRAPGKIFWRTVRGMLPHKTNRGNEALKNLRAYEGVPAKYQKTKSLHAPSASRFRLQPRRKFCVVGRLSHEVGWQFQDVVAKLEAKRKVKGAAYFEQKKKMDKLAVQAKKNAAPKIAQYQKIIEALGYN</sequence>
<evidence type="ECO:0000305" key="1"/>
<evidence type="ECO:0000312" key="2">
    <source>
        <dbReference type="WormBase" id="M01F1.2"/>
    </source>
</evidence>
<dbReference type="EMBL" id="U31528">
    <property type="protein sequence ID" value="AAA74904.1"/>
    <property type="molecule type" value="mRNA"/>
</dbReference>
<dbReference type="EMBL" id="Z46381">
    <property type="protein sequence ID" value="CAA86515.1"/>
    <property type="molecule type" value="Genomic_DNA"/>
</dbReference>
<dbReference type="PIR" id="T23654">
    <property type="entry name" value="T23654"/>
</dbReference>
<dbReference type="RefSeq" id="NP_001379064.1">
    <property type="nucleotide sequence ID" value="NM_001393308.1"/>
</dbReference>
<dbReference type="RefSeq" id="NP_497721.1">
    <property type="nucleotide sequence ID" value="NM_065320.7"/>
</dbReference>
<dbReference type="PDB" id="9BH5">
    <property type="method" value="EM"/>
    <property type="resolution" value="2.63 A"/>
    <property type="chains" value="CO=1-202"/>
</dbReference>
<dbReference type="PDB" id="9CAI">
    <property type="method" value="EM"/>
    <property type="resolution" value="2.59 A"/>
    <property type="chains" value="CO=1-202"/>
</dbReference>
<dbReference type="PDBsum" id="9BH5"/>
<dbReference type="PDBsum" id="9CAI"/>
<dbReference type="EMDB" id="EMD-44533"/>
<dbReference type="EMDB" id="EMD-45392"/>
<dbReference type="SMR" id="Q27389"/>
<dbReference type="BioGRID" id="40696">
    <property type="interactions" value="94"/>
</dbReference>
<dbReference type="DIP" id="DIP-25636N"/>
<dbReference type="FunCoup" id="Q27389">
    <property type="interactions" value="1581"/>
</dbReference>
<dbReference type="STRING" id="6239.M01F1.2.2"/>
<dbReference type="PaxDb" id="6239-M01F1.2.1"/>
<dbReference type="PeptideAtlas" id="Q27389"/>
<dbReference type="EnsemblMetazoa" id="M01F1.2.1">
    <property type="protein sequence ID" value="M01F1.2.1"/>
    <property type="gene ID" value="WBGene00004428"/>
</dbReference>
<dbReference type="GeneID" id="175455"/>
<dbReference type="UCSC" id="M01F1.2.2">
    <property type="organism name" value="c. elegans"/>
</dbReference>
<dbReference type="AGR" id="WB:WBGene00004428"/>
<dbReference type="WormBase" id="M01F1.2">
    <property type="protein sequence ID" value="CE01030"/>
    <property type="gene ID" value="WBGene00004428"/>
    <property type="gene designation" value="rpl-13A"/>
</dbReference>
<dbReference type="eggNOG" id="KOG3204">
    <property type="taxonomic scope" value="Eukaryota"/>
</dbReference>
<dbReference type="GeneTree" id="ENSGT00390000010799"/>
<dbReference type="HOGENOM" id="CLU_076922_0_0_1"/>
<dbReference type="InParanoid" id="Q27389"/>
<dbReference type="OMA" id="GMLPWKT"/>
<dbReference type="OrthoDB" id="1882297at2759"/>
<dbReference type="PhylomeDB" id="Q27389"/>
<dbReference type="Reactome" id="R-CEL-156827">
    <property type="pathway name" value="L13a-mediated translational silencing of Ceruloplasmin expression"/>
</dbReference>
<dbReference type="Reactome" id="R-CEL-1799339">
    <property type="pathway name" value="SRP-dependent cotranslational protein targeting to membrane"/>
</dbReference>
<dbReference type="Reactome" id="R-CEL-72689">
    <property type="pathway name" value="Formation of a pool of free 40S subunits"/>
</dbReference>
<dbReference type="Reactome" id="R-CEL-72706">
    <property type="pathway name" value="GTP hydrolysis and joining of the 60S ribosomal subunit"/>
</dbReference>
<dbReference type="Reactome" id="R-CEL-975956">
    <property type="pathway name" value="Nonsense Mediated Decay (NMD) independent of the Exon Junction Complex (EJC)"/>
</dbReference>
<dbReference type="Reactome" id="R-CEL-975957">
    <property type="pathway name" value="Nonsense Mediated Decay (NMD) enhanced by the Exon Junction Complex (EJC)"/>
</dbReference>
<dbReference type="SignaLink" id="Q27389"/>
<dbReference type="PRO" id="PR:Q27389"/>
<dbReference type="Proteomes" id="UP000001940">
    <property type="component" value="Chromosome III"/>
</dbReference>
<dbReference type="Bgee" id="WBGene00004428">
    <property type="expression patterns" value="Expressed in germ line (C elegans) and 4 other cell types or tissues"/>
</dbReference>
<dbReference type="GO" id="GO:0022625">
    <property type="term" value="C:cytosolic large ribosomal subunit"/>
    <property type="evidence" value="ECO:0000318"/>
    <property type="project" value="GO_Central"/>
</dbReference>
<dbReference type="GO" id="GO:0005840">
    <property type="term" value="C:ribosome"/>
    <property type="evidence" value="ECO:0000318"/>
    <property type="project" value="GO_Central"/>
</dbReference>
<dbReference type="GO" id="GO:0003729">
    <property type="term" value="F:mRNA binding"/>
    <property type="evidence" value="ECO:0000318"/>
    <property type="project" value="GO_Central"/>
</dbReference>
<dbReference type="GO" id="GO:0003735">
    <property type="term" value="F:structural constituent of ribosome"/>
    <property type="evidence" value="ECO:0000318"/>
    <property type="project" value="GO_Central"/>
</dbReference>
<dbReference type="GO" id="GO:0017148">
    <property type="term" value="P:negative regulation of translation"/>
    <property type="evidence" value="ECO:0000318"/>
    <property type="project" value="GO_Central"/>
</dbReference>
<dbReference type="GO" id="GO:0006412">
    <property type="term" value="P:translation"/>
    <property type="evidence" value="ECO:0007669"/>
    <property type="project" value="InterPro"/>
</dbReference>
<dbReference type="CDD" id="cd00392">
    <property type="entry name" value="Ribosomal_L13"/>
    <property type="match status" value="1"/>
</dbReference>
<dbReference type="FunFam" id="6.10.250.3250:FF:000001">
    <property type="entry name" value="60S ribosomal protein L13a"/>
    <property type="match status" value="1"/>
</dbReference>
<dbReference type="FunFam" id="3.90.1180.10:FF:000002">
    <property type="entry name" value="60S ribosomal protein L16"/>
    <property type="match status" value="1"/>
</dbReference>
<dbReference type="Gene3D" id="6.10.250.3250">
    <property type="match status" value="1"/>
</dbReference>
<dbReference type="Gene3D" id="3.90.1180.10">
    <property type="entry name" value="Ribosomal protein L13"/>
    <property type="match status" value="1"/>
</dbReference>
<dbReference type="HAMAP" id="MF_01366">
    <property type="entry name" value="Ribosomal_uL13"/>
    <property type="match status" value="1"/>
</dbReference>
<dbReference type="InterPro" id="IPR005822">
    <property type="entry name" value="Ribosomal_uL13"/>
</dbReference>
<dbReference type="InterPro" id="IPR023563">
    <property type="entry name" value="Ribosomal_uL13_CS"/>
</dbReference>
<dbReference type="InterPro" id="IPR005755">
    <property type="entry name" value="Ribosomal_uL13_euk/arc"/>
</dbReference>
<dbReference type="InterPro" id="IPR036899">
    <property type="entry name" value="Ribosomal_uL13_sf"/>
</dbReference>
<dbReference type="NCBIfam" id="TIGR01077">
    <property type="entry name" value="L13_A_E"/>
    <property type="match status" value="1"/>
</dbReference>
<dbReference type="PANTHER" id="PTHR11545:SF3">
    <property type="entry name" value="LARGE RIBOSOMAL SUBUNIT PROTEIN UL13"/>
    <property type="match status" value="1"/>
</dbReference>
<dbReference type="PANTHER" id="PTHR11545">
    <property type="entry name" value="RIBOSOMAL PROTEIN L13"/>
    <property type="match status" value="1"/>
</dbReference>
<dbReference type="Pfam" id="PF00572">
    <property type="entry name" value="Ribosomal_L13"/>
    <property type="match status" value="1"/>
</dbReference>
<dbReference type="SUPFAM" id="SSF52161">
    <property type="entry name" value="Ribosomal protein L13"/>
    <property type="match status" value="1"/>
</dbReference>
<dbReference type="PROSITE" id="PS00783">
    <property type="entry name" value="RIBOSOMAL_L13"/>
    <property type="match status" value="1"/>
</dbReference>
<organism>
    <name type="scientific">Caenorhabditis elegans</name>
    <dbReference type="NCBI Taxonomy" id="6239"/>
    <lineage>
        <taxon>Eukaryota</taxon>
        <taxon>Metazoa</taxon>
        <taxon>Ecdysozoa</taxon>
        <taxon>Nematoda</taxon>
        <taxon>Chromadorea</taxon>
        <taxon>Rhabditida</taxon>
        <taxon>Rhabditina</taxon>
        <taxon>Rhabditomorpha</taxon>
        <taxon>Rhabditoidea</taxon>
        <taxon>Rhabditidae</taxon>
        <taxon>Peloderinae</taxon>
        <taxon>Caenorhabditis</taxon>
    </lineage>
</organism>
<protein>
    <recommendedName>
        <fullName evidence="1">Large ribosomal subunit protein uL13</fullName>
    </recommendedName>
    <alternativeName>
        <fullName>60S ribosomal protein L13a</fullName>
    </alternativeName>
</protein>
<accession>Q27389</accession>
<feature type="chain" id="PRO_0000133778" description="Large ribosomal subunit protein uL13">
    <location>
        <begin position="1"/>
        <end position="202"/>
    </location>
</feature>
<name>RL13A_CAEEL</name>
<reference key="1">
    <citation type="submission" date="1995-08" db="EMBL/GenBank/DDBJ databases">
        <authorList>
            <person name="Cope M.J.T."/>
            <person name="Kendrick-Jones J."/>
        </authorList>
    </citation>
    <scope>NUCLEOTIDE SEQUENCE [MRNA]</scope>
    <source>
        <strain>Bristol N2</strain>
    </source>
</reference>
<reference key="2">
    <citation type="journal article" date="1998" name="Science">
        <title>Genome sequence of the nematode C. elegans: a platform for investigating biology.</title>
        <authorList>
            <consortium name="The C. elegans sequencing consortium"/>
        </authorList>
    </citation>
    <scope>NUCLEOTIDE SEQUENCE [LARGE SCALE GENOMIC DNA]</scope>
    <source>
        <strain>Bristol N2</strain>
    </source>
</reference>
<keyword id="KW-0002">3D-structure</keyword>
<keyword id="KW-1185">Reference proteome</keyword>
<keyword id="KW-0687">Ribonucleoprotein</keyword>
<keyword id="KW-0689">Ribosomal protein</keyword>